<evidence type="ECO:0000250" key="1">
    <source>
        <dbReference type="UniProtKB" id="O14832"/>
    </source>
</evidence>
<evidence type="ECO:0000250" key="2">
    <source>
        <dbReference type="UniProtKB" id="Q5SRE7"/>
    </source>
</evidence>
<evidence type="ECO:0000305" key="3"/>
<evidence type="ECO:0000312" key="4">
    <source>
        <dbReference type="MGI" id="MGI:3612860"/>
    </source>
</evidence>
<protein>
    <recommendedName>
        <fullName evidence="2">Phytanoyl-CoA dioxygenase domain-containing protein 1</fullName>
        <shortName evidence="2">Protein PHYHD1</shortName>
        <ecNumber evidence="2">1.14.11.-</ecNumber>
    </recommendedName>
</protein>
<feature type="chain" id="PRO_0000313634" description="Phytanoyl-CoA dioxygenase domain-containing protein 1">
    <location>
        <begin position="1"/>
        <end position="291"/>
    </location>
</feature>
<feature type="binding site" evidence="1">
    <location>
        <position position="102"/>
    </location>
    <ligand>
        <name>2-oxoglutarate</name>
        <dbReference type="ChEBI" id="CHEBI:16810"/>
    </ligand>
</feature>
<feature type="binding site" evidence="1">
    <location>
        <position position="141"/>
    </location>
    <ligand>
        <name>2-oxoglutarate</name>
        <dbReference type="ChEBI" id="CHEBI:16810"/>
    </ligand>
</feature>
<feature type="binding site" evidence="1">
    <location>
        <begin position="156"/>
        <end position="158"/>
    </location>
    <ligand>
        <name>2-oxoglutarate</name>
        <dbReference type="ChEBI" id="CHEBI:16810"/>
    </ligand>
</feature>
<feature type="binding site" evidence="1">
    <location>
        <position position="156"/>
    </location>
    <ligand>
        <name>Fe cation</name>
        <dbReference type="ChEBI" id="CHEBI:24875"/>
    </ligand>
</feature>
<feature type="binding site" evidence="1">
    <location>
        <position position="158"/>
    </location>
    <ligand>
        <name>Fe cation</name>
        <dbReference type="ChEBI" id="CHEBI:24875"/>
    </ligand>
</feature>
<feature type="binding site" evidence="1">
    <location>
        <position position="174"/>
    </location>
    <ligand>
        <name>2-oxoglutarate</name>
        <dbReference type="ChEBI" id="CHEBI:16810"/>
    </ligand>
</feature>
<feature type="binding site" evidence="1">
    <location>
        <position position="246"/>
    </location>
    <ligand>
        <name>Fe cation</name>
        <dbReference type="ChEBI" id="CHEBI:24875"/>
    </ligand>
</feature>
<feature type="binding site" evidence="1">
    <location>
        <position position="248"/>
    </location>
    <ligand>
        <name>2-oxoglutarate</name>
        <dbReference type="ChEBI" id="CHEBI:16810"/>
    </ligand>
</feature>
<feature type="binding site" evidence="1">
    <location>
        <position position="257"/>
    </location>
    <ligand>
        <name>2-oxoglutarate</name>
        <dbReference type="ChEBI" id="CHEBI:16810"/>
    </ligand>
</feature>
<feature type="modified residue" description="Phosphothreonine" evidence="2">
    <location>
        <position position="55"/>
    </location>
</feature>
<organism>
    <name type="scientific">Mus musculus</name>
    <name type="common">Mouse</name>
    <dbReference type="NCBI Taxonomy" id="10090"/>
    <lineage>
        <taxon>Eukaryota</taxon>
        <taxon>Metazoa</taxon>
        <taxon>Chordata</taxon>
        <taxon>Craniata</taxon>
        <taxon>Vertebrata</taxon>
        <taxon>Euteleostomi</taxon>
        <taxon>Mammalia</taxon>
        <taxon>Eutheria</taxon>
        <taxon>Euarchontoglires</taxon>
        <taxon>Glires</taxon>
        <taxon>Rodentia</taxon>
        <taxon>Myomorpha</taxon>
        <taxon>Muroidea</taxon>
        <taxon>Muridae</taxon>
        <taxon>Murinae</taxon>
        <taxon>Mus</taxon>
        <taxon>Mus</taxon>
    </lineage>
</organism>
<comment type="function">
    <text evidence="2">2-oxoglutarate(2OG)-dependent dioxygenase that catalyzes the conversion of 2-oxoglutarate to succinate and CO(2) in an iron-dependent manner. However, does not couple 2OG turnover to the hydroxylation of acyl-coenzyme A derivatives, implying that it is not directly involved in phytanoyl coenzyme-A metabolism. Does not show detectable activity towards fatty acid CoA thioesters.</text>
</comment>
<comment type="cofactor">
    <cofactor evidence="2">
        <name>Fe cation</name>
        <dbReference type="ChEBI" id="CHEBI:24875"/>
    </cofactor>
</comment>
<comment type="similarity">
    <text evidence="3">Belongs to the PhyH family. PHYHD1 subfamily.</text>
</comment>
<comment type="sequence caution" evidence="3">
    <conflict type="erroneous initiation">
        <sequence resource="EMBL-CDS" id="AAI32272"/>
    </conflict>
</comment>
<comment type="sequence caution" evidence="3">
    <conflict type="erroneous initiation">
        <sequence resource="EMBL-CDS" id="AAI32274"/>
    </conflict>
</comment>
<comment type="sequence caution" evidence="3">
    <conflict type="erroneous initiation">
        <sequence resource="EMBL-CDS" id="BAB23937"/>
    </conflict>
</comment>
<comment type="sequence caution" evidence="3">
    <conflict type="erroneous initiation">
        <sequence resource="EMBL-CDS" id="BAE23715"/>
    </conflict>
</comment>
<sequence length="291" mass="32517">MACLSPSQLKKFQEDGFLLLEGFFTADECVAMQQRIGEIVAEMDVPLHCRTEFSTQEDEQLQTQGKTDYFLSSGDKIRFFFEKGVFDEKGNFLVPPEKSINKIGHALHAHDPVFRSITHSPKVQALVRSLGLQMPVVVQSMYIFKQPHFGGEVSPHQDATFLYTEPLGRVLGLWIAMEDAMLENGCLWFIPGSHTRGVSRRMIRAPSDSGPGTSFLGSDPAWASNLFVPLPVRRGGLVLIHGEVVHKSEQNHSDHSRQAYTVHLMEAAGTVWSPGNWLQPTPELPFPPLYS</sequence>
<accession>Q9DB26</accession>
<accession>A2AQZ4</accession>
<accession>Q80V68</accession>
<keyword id="KW-0223">Dioxygenase</keyword>
<keyword id="KW-0408">Iron</keyword>
<keyword id="KW-0479">Metal-binding</keyword>
<keyword id="KW-0560">Oxidoreductase</keyword>
<keyword id="KW-0597">Phosphoprotein</keyword>
<keyword id="KW-1185">Reference proteome</keyword>
<gene>
    <name evidence="4" type="primary">Phyhd1</name>
</gene>
<dbReference type="EC" id="1.14.11.-" evidence="2"/>
<dbReference type="EMBL" id="AK005293">
    <property type="protein sequence ID" value="BAB23937.1"/>
    <property type="status" value="ALT_INIT"/>
    <property type="molecule type" value="mRNA"/>
</dbReference>
<dbReference type="EMBL" id="AK138607">
    <property type="protein sequence ID" value="BAE23715.1"/>
    <property type="status" value="ALT_INIT"/>
    <property type="molecule type" value="mRNA"/>
</dbReference>
<dbReference type="EMBL" id="AL845258">
    <property type="status" value="NOT_ANNOTATED_CDS"/>
    <property type="molecule type" value="Genomic_DNA"/>
</dbReference>
<dbReference type="EMBL" id="AL954388">
    <property type="status" value="NOT_ANNOTATED_CDS"/>
    <property type="molecule type" value="Genomic_DNA"/>
</dbReference>
<dbReference type="EMBL" id="BC039982">
    <property type="protein sequence ID" value="AAH39982.1"/>
    <property type="molecule type" value="mRNA"/>
</dbReference>
<dbReference type="EMBL" id="BC132271">
    <property type="protein sequence ID" value="AAI32272.1"/>
    <property type="status" value="ALT_INIT"/>
    <property type="molecule type" value="mRNA"/>
</dbReference>
<dbReference type="EMBL" id="BC132273">
    <property type="protein sequence ID" value="AAI32274.1"/>
    <property type="status" value="ALT_INIT"/>
    <property type="molecule type" value="mRNA"/>
</dbReference>
<dbReference type="CCDS" id="CCDS57163.1"/>
<dbReference type="RefSeq" id="NP_001239497.1">
    <property type="nucleotide sequence ID" value="NM_001252568.2"/>
</dbReference>
<dbReference type="RefSeq" id="NP_001239499.1">
    <property type="nucleotide sequence ID" value="NM_001252570.1"/>
</dbReference>
<dbReference type="RefSeq" id="NP_001268758.1">
    <property type="nucleotide sequence ID" value="NM_001281829.1"/>
</dbReference>
<dbReference type="RefSeq" id="NP_758471.1">
    <property type="nucleotide sequence ID" value="NM_172267.4"/>
</dbReference>
<dbReference type="SMR" id="Q9DB26"/>
<dbReference type="FunCoup" id="Q9DB26">
    <property type="interactions" value="12"/>
</dbReference>
<dbReference type="STRING" id="10090.ENSMUSP00000088663"/>
<dbReference type="GlyGen" id="Q9DB26">
    <property type="glycosylation" value="1 site"/>
</dbReference>
<dbReference type="iPTMnet" id="Q9DB26"/>
<dbReference type="PhosphoSitePlus" id="Q9DB26"/>
<dbReference type="SwissPalm" id="Q9DB26"/>
<dbReference type="jPOST" id="Q9DB26"/>
<dbReference type="PaxDb" id="10090-ENSMUSP00000088663"/>
<dbReference type="ProteomicsDB" id="288204"/>
<dbReference type="Pumba" id="Q9DB26"/>
<dbReference type="Antibodypedia" id="2006">
    <property type="antibodies" value="141 antibodies from 25 providers"/>
</dbReference>
<dbReference type="DNASU" id="227696"/>
<dbReference type="Ensembl" id="ENSMUST00000113645.8">
    <property type="protein sequence ID" value="ENSMUSP00000109275.2"/>
    <property type="gene ID" value="ENSMUSG00000079484.13"/>
</dbReference>
<dbReference type="Ensembl" id="ENSMUST00000154647.8">
    <property type="protein sequence ID" value="ENSMUSP00000121371.2"/>
    <property type="gene ID" value="ENSMUSG00000079484.13"/>
</dbReference>
<dbReference type="GeneID" id="227696"/>
<dbReference type="KEGG" id="mmu:227696"/>
<dbReference type="UCSC" id="uc008jbv.3">
    <property type="organism name" value="mouse"/>
</dbReference>
<dbReference type="AGR" id="MGI:3612860"/>
<dbReference type="CTD" id="254295"/>
<dbReference type="MGI" id="MGI:3612860">
    <property type="gene designation" value="Phyhd1"/>
</dbReference>
<dbReference type="VEuPathDB" id="HostDB:ENSMUSG00000079484"/>
<dbReference type="eggNOG" id="KOG3290">
    <property type="taxonomic scope" value="Eukaryota"/>
</dbReference>
<dbReference type="GeneTree" id="ENSGT00390000006287"/>
<dbReference type="HOGENOM" id="CLU_048953_0_0_1"/>
<dbReference type="InParanoid" id="Q9DB26"/>
<dbReference type="OMA" id="KYSEDNW"/>
<dbReference type="OrthoDB" id="445007at2759"/>
<dbReference type="PhylomeDB" id="Q9DB26"/>
<dbReference type="TreeFam" id="TF300011"/>
<dbReference type="BioGRID-ORCS" id="227696">
    <property type="hits" value="2 hits in 78 CRISPR screens"/>
</dbReference>
<dbReference type="ChiTaRS" id="Phyhd1">
    <property type="organism name" value="mouse"/>
</dbReference>
<dbReference type="PRO" id="PR:Q9DB26"/>
<dbReference type="Proteomes" id="UP000000589">
    <property type="component" value="Chromosome 2"/>
</dbReference>
<dbReference type="RNAct" id="Q9DB26">
    <property type="molecule type" value="protein"/>
</dbReference>
<dbReference type="Bgee" id="ENSMUSG00000079484">
    <property type="expression patterns" value="Expressed in cortex of kidney and 59 other cell types or tissues"/>
</dbReference>
<dbReference type="ExpressionAtlas" id="Q9DB26">
    <property type="expression patterns" value="baseline and differential"/>
</dbReference>
<dbReference type="GO" id="GO:0016706">
    <property type="term" value="F:2-oxoglutarate-dependent dioxygenase activity"/>
    <property type="evidence" value="ECO:0007669"/>
    <property type="project" value="Ensembl"/>
</dbReference>
<dbReference type="GO" id="GO:0046872">
    <property type="term" value="F:metal ion binding"/>
    <property type="evidence" value="ECO:0007669"/>
    <property type="project" value="UniProtKB-KW"/>
</dbReference>
<dbReference type="Gene3D" id="2.60.120.620">
    <property type="entry name" value="q2cbj1_9rhob like domain"/>
    <property type="match status" value="1"/>
</dbReference>
<dbReference type="InterPro" id="IPR008775">
    <property type="entry name" value="Phytyl_CoA_dOase-like"/>
</dbReference>
<dbReference type="PANTHER" id="PTHR20883">
    <property type="entry name" value="PHYTANOYL-COA DIOXYGENASE DOMAIN CONTAINING 1"/>
    <property type="match status" value="1"/>
</dbReference>
<dbReference type="PANTHER" id="PTHR20883:SF15">
    <property type="entry name" value="PHYTANOYL-COA DIOXYGENASE DOMAIN-CONTAINING PROTEIN 1"/>
    <property type="match status" value="1"/>
</dbReference>
<dbReference type="Pfam" id="PF05721">
    <property type="entry name" value="PhyH"/>
    <property type="match status" value="1"/>
</dbReference>
<dbReference type="SUPFAM" id="SSF51197">
    <property type="entry name" value="Clavaminate synthase-like"/>
    <property type="match status" value="1"/>
</dbReference>
<name>PHYD1_MOUSE</name>
<reference key="1">
    <citation type="journal article" date="2005" name="Science">
        <title>The transcriptional landscape of the mammalian genome.</title>
        <authorList>
            <person name="Carninci P."/>
            <person name="Kasukawa T."/>
            <person name="Katayama S."/>
            <person name="Gough J."/>
            <person name="Frith M.C."/>
            <person name="Maeda N."/>
            <person name="Oyama R."/>
            <person name="Ravasi T."/>
            <person name="Lenhard B."/>
            <person name="Wells C."/>
            <person name="Kodzius R."/>
            <person name="Shimokawa K."/>
            <person name="Bajic V.B."/>
            <person name="Brenner S.E."/>
            <person name="Batalov S."/>
            <person name="Forrest A.R."/>
            <person name="Zavolan M."/>
            <person name="Davis M.J."/>
            <person name="Wilming L.G."/>
            <person name="Aidinis V."/>
            <person name="Allen J.E."/>
            <person name="Ambesi-Impiombato A."/>
            <person name="Apweiler R."/>
            <person name="Aturaliya R.N."/>
            <person name="Bailey T.L."/>
            <person name="Bansal M."/>
            <person name="Baxter L."/>
            <person name="Beisel K.W."/>
            <person name="Bersano T."/>
            <person name="Bono H."/>
            <person name="Chalk A.M."/>
            <person name="Chiu K.P."/>
            <person name="Choudhary V."/>
            <person name="Christoffels A."/>
            <person name="Clutterbuck D.R."/>
            <person name="Crowe M.L."/>
            <person name="Dalla E."/>
            <person name="Dalrymple B.P."/>
            <person name="de Bono B."/>
            <person name="Della Gatta G."/>
            <person name="di Bernardo D."/>
            <person name="Down T."/>
            <person name="Engstrom P."/>
            <person name="Fagiolini M."/>
            <person name="Faulkner G."/>
            <person name="Fletcher C.F."/>
            <person name="Fukushima T."/>
            <person name="Furuno M."/>
            <person name="Futaki S."/>
            <person name="Gariboldi M."/>
            <person name="Georgii-Hemming P."/>
            <person name="Gingeras T.R."/>
            <person name="Gojobori T."/>
            <person name="Green R.E."/>
            <person name="Gustincich S."/>
            <person name="Harbers M."/>
            <person name="Hayashi Y."/>
            <person name="Hensch T.K."/>
            <person name="Hirokawa N."/>
            <person name="Hill D."/>
            <person name="Huminiecki L."/>
            <person name="Iacono M."/>
            <person name="Ikeo K."/>
            <person name="Iwama A."/>
            <person name="Ishikawa T."/>
            <person name="Jakt M."/>
            <person name="Kanapin A."/>
            <person name="Katoh M."/>
            <person name="Kawasawa Y."/>
            <person name="Kelso J."/>
            <person name="Kitamura H."/>
            <person name="Kitano H."/>
            <person name="Kollias G."/>
            <person name="Krishnan S.P."/>
            <person name="Kruger A."/>
            <person name="Kummerfeld S.K."/>
            <person name="Kurochkin I.V."/>
            <person name="Lareau L.F."/>
            <person name="Lazarevic D."/>
            <person name="Lipovich L."/>
            <person name="Liu J."/>
            <person name="Liuni S."/>
            <person name="McWilliam S."/>
            <person name="Madan Babu M."/>
            <person name="Madera M."/>
            <person name="Marchionni L."/>
            <person name="Matsuda H."/>
            <person name="Matsuzawa S."/>
            <person name="Miki H."/>
            <person name="Mignone F."/>
            <person name="Miyake S."/>
            <person name="Morris K."/>
            <person name="Mottagui-Tabar S."/>
            <person name="Mulder N."/>
            <person name="Nakano N."/>
            <person name="Nakauchi H."/>
            <person name="Ng P."/>
            <person name="Nilsson R."/>
            <person name="Nishiguchi S."/>
            <person name="Nishikawa S."/>
            <person name="Nori F."/>
            <person name="Ohara O."/>
            <person name="Okazaki Y."/>
            <person name="Orlando V."/>
            <person name="Pang K.C."/>
            <person name="Pavan W.J."/>
            <person name="Pavesi G."/>
            <person name="Pesole G."/>
            <person name="Petrovsky N."/>
            <person name="Piazza S."/>
            <person name="Reed J."/>
            <person name="Reid J.F."/>
            <person name="Ring B.Z."/>
            <person name="Ringwald M."/>
            <person name="Rost B."/>
            <person name="Ruan Y."/>
            <person name="Salzberg S.L."/>
            <person name="Sandelin A."/>
            <person name="Schneider C."/>
            <person name="Schoenbach C."/>
            <person name="Sekiguchi K."/>
            <person name="Semple C.A."/>
            <person name="Seno S."/>
            <person name="Sessa L."/>
            <person name="Sheng Y."/>
            <person name="Shibata Y."/>
            <person name="Shimada H."/>
            <person name="Shimada K."/>
            <person name="Silva D."/>
            <person name="Sinclair B."/>
            <person name="Sperling S."/>
            <person name="Stupka E."/>
            <person name="Sugiura K."/>
            <person name="Sultana R."/>
            <person name="Takenaka Y."/>
            <person name="Taki K."/>
            <person name="Tammoja K."/>
            <person name="Tan S.L."/>
            <person name="Tang S."/>
            <person name="Taylor M.S."/>
            <person name="Tegner J."/>
            <person name="Teichmann S.A."/>
            <person name="Ueda H.R."/>
            <person name="van Nimwegen E."/>
            <person name="Verardo R."/>
            <person name="Wei C.L."/>
            <person name="Yagi K."/>
            <person name="Yamanishi H."/>
            <person name="Zabarovsky E."/>
            <person name="Zhu S."/>
            <person name="Zimmer A."/>
            <person name="Hide W."/>
            <person name="Bult C."/>
            <person name="Grimmond S.M."/>
            <person name="Teasdale R.D."/>
            <person name="Liu E.T."/>
            <person name="Brusic V."/>
            <person name="Quackenbush J."/>
            <person name="Wahlestedt C."/>
            <person name="Mattick J.S."/>
            <person name="Hume D.A."/>
            <person name="Kai C."/>
            <person name="Sasaki D."/>
            <person name="Tomaru Y."/>
            <person name="Fukuda S."/>
            <person name="Kanamori-Katayama M."/>
            <person name="Suzuki M."/>
            <person name="Aoki J."/>
            <person name="Arakawa T."/>
            <person name="Iida J."/>
            <person name="Imamura K."/>
            <person name="Itoh M."/>
            <person name="Kato T."/>
            <person name="Kawaji H."/>
            <person name="Kawagashira N."/>
            <person name="Kawashima T."/>
            <person name="Kojima M."/>
            <person name="Kondo S."/>
            <person name="Konno H."/>
            <person name="Nakano K."/>
            <person name="Ninomiya N."/>
            <person name="Nishio T."/>
            <person name="Okada M."/>
            <person name="Plessy C."/>
            <person name="Shibata K."/>
            <person name="Shiraki T."/>
            <person name="Suzuki S."/>
            <person name="Tagami M."/>
            <person name="Waki K."/>
            <person name="Watahiki A."/>
            <person name="Okamura-Oho Y."/>
            <person name="Suzuki H."/>
            <person name="Kawai J."/>
            <person name="Hayashizaki Y."/>
        </authorList>
    </citation>
    <scope>NUCLEOTIDE SEQUENCE [LARGE SCALE MRNA]</scope>
    <source>
        <strain>C57BL/6J</strain>
        <tissue>Cerebellum</tissue>
        <tissue>Spinal cord</tissue>
    </source>
</reference>
<reference key="2">
    <citation type="journal article" date="2009" name="PLoS Biol.">
        <title>Lineage-specific biology revealed by a finished genome assembly of the mouse.</title>
        <authorList>
            <person name="Church D.M."/>
            <person name="Goodstadt L."/>
            <person name="Hillier L.W."/>
            <person name="Zody M.C."/>
            <person name="Goldstein S."/>
            <person name="She X."/>
            <person name="Bult C.J."/>
            <person name="Agarwala R."/>
            <person name="Cherry J.L."/>
            <person name="DiCuccio M."/>
            <person name="Hlavina W."/>
            <person name="Kapustin Y."/>
            <person name="Meric P."/>
            <person name="Maglott D."/>
            <person name="Birtle Z."/>
            <person name="Marques A.C."/>
            <person name="Graves T."/>
            <person name="Zhou S."/>
            <person name="Teague B."/>
            <person name="Potamousis K."/>
            <person name="Churas C."/>
            <person name="Place M."/>
            <person name="Herschleb J."/>
            <person name="Runnheim R."/>
            <person name="Forrest D."/>
            <person name="Amos-Landgraf J."/>
            <person name="Schwartz D.C."/>
            <person name="Cheng Z."/>
            <person name="Lindblad-Toh K."/>
            <person name="Eichler E.E."/>
            <person name="Ponting C.P."/>
        </authorList>
    </citation>
    <scope>NUCLEOTIDE SEQUENCE [LARGE SCALE GENOMIC DNA]</scope>
    <source>
        <strain>C57BL/6J</strain>
    </source>
</reference>
<reference key="3">
    <citation type="journal article" date="2004" name="Genome Res.">
        <title>The status, quality, and expansion of the NIH full-length cDNA project: the Mammalian Gene Collection (MGC).</title>
        <authorList>
            <consortium name="The MGC Project Team"/>
        </authorList>
    </citation>
    <scope>NUCLEOTIDE SEQUENCE [LARGE SCALE MRNA]</scope>
    <source>
        <strain>FVB/N</strain>
        <tissue>Brain</tissue>
        <tissue>Mammary tumor</tissue>
    </source>
</reference>
<reference key="4">
    <citation type="journal article" date="2010" name="Cell">
        <title>A tissue-specific atlas of mouse protein phosphorylation and expression.</title>
        <authorList>
            <person name="Huttlin E.L."/>
            <person name="Jedrychowski M.P."/>
            <person name="Elias J.E."/>
            <person name="Goswami T."/>
            <person name="Rad R."/>
            <person name="Beausoleil S.A."/>
            <person name="Villen J."/>
            <person name="Haas W."/>
            <person name="Sowa M.E."/>
            <person name="Gygi S.P."/>
        </authorList>
    </citation>
    <scope>IDENTIFICATION BY MASS SPECTROMETRY [LARGE SCALE ANALYSIS]</scope>
    <source>
        <tissue>Brown adipose tissue</tissue>
        <tissue>Heart</tissue>
        <tissue>Kidney</tissue>
        <tissue>Liver</tissue>
        <tissue>Lung</tissue>
        <tissue>Spleen</tissue>
    </source>
</reference>
<proteinExistence type="evidence at protein level"/>